<comment type="catalytic activity">
    <reaction>
        <text>H2 + A = AH2</text>
        <dbReference type="Rhea" id="RHEA:12116"/>
        <dbReference type="ChEBI" id="CHEBI:13193"/>
        <dbReference type="ChEBI" id="CHEBI:17499"/>
        <dbReference type="ChEBI" id="CHEBI:18276"/>
        <dbReference type="EC" id="1.12.99.6"/>
    </reaction>
</comment>
<comment type="cofactor">
    <cofactor>
        <name>Ni(2+)</name>
        <dbReference type="ChEBI" id="CHEBI:49786"/>
    </cofactor>
</comment>
<comment type="cofactor">
    <cofactor>
        <name>Fe cation</name>
        <dbReference type="ChEBI" id="CHEBI:24875"/>
    </cofactor>
</comment>
<comment type="subunit">
    <text>Heterodimer of a large and a small subunit.</text>
</comment>
<comment type="subcellular location">
    <subcellularLocation>
        <location>Periplasm</location>
    </subcellularLocation>
</comment>
<comment type="similarity">
    <text evidence="1">Belongs to the [NiFe]/[NiFeSe] hydrogenase large subunit family.</text>
</comment>
<organism>
    <name type="scientific">Desulfomicrobium norvegicum (strain DSM 1741 / NCIMB 8310)</name>
    <name type="common">Desulfovibrio baculatus (strain Norway 4)</name>
    <name type="synonym">Desulfovibrio desulfuricans (strain Norway 4)</name>
    <dbReference type="NCBI Taxonomy" id="52561"/>
    <lineage>
        <taxon>Bacteria</taxon>
        <taxon>Pseudomonadati</taxon>
        <taxon>Thermodesulfobacteriota</taxon>
        <taxon>Desulfovibrionia</taxon>
        <taxon>Desulfovibrionales</taxon>
        <taxon>Desulfomicrobiaceae</taxon>
        <taxon>Desulfomicrobium</taxon>
    </lineage>
</organism>
<name>PHSL_DESNO</name>
<evidence type="ECO:0000305" key="1"/>
<sequence length="19" mass="1942">AQAATPAADGKKKISIDTR</sequence>
<proteinExistence type="evidence at protein level"/>
<reference key="1">
    <citation type="journal article" date="1987" name="Biochem. Biophys. Res. Commun.">
        <title>Identification of three classes of hydrogenase in the genus, Desulfovibrio.</title>
        <authorList>
            <person name="Prickril B.C."/>
            <person name="He S.H."/>
            <person name="Li C."/>
            <person name="Menon N.K."/>
            <person name="Choi E.S."/>
            <person name="Przybyla A.E."/>
            <person name="Dervartanian D.V."/>
            <person name="Peck H.D. Jr."/>
            <person name="Fauque G."/>
            <person name="le Gall J."/>
            <person name="Teixeira M."/>
            <person name="Moura I."/>
            <person name="Moura J.J.G."/>
            <person name="Patil D."/>
            <person name="Huynh B.H."/>
        </authorList>
    </citation>
    <scope>PROTEIN SEQUENCE</scope>
</reference>
<protein>
    <recommendedName>
        <fullName>Periplasmic [NiFeSe] hydrogenase large subunit</fullName>
        <ecNumber>1.12.99.6</ecNumber>
    </recommendedName>
    <alternativeName>
        <fullName>NiFeSe hydrogenlyase large chain</fullName>
    </alternativeName>
</protein>
<feature type="chain" id="PRO_0000199705" description="Periplasmic [NiFeSe] hydrogenase large subunit">
    <location>
        <begin position="1"/>
        <end position="19" status="greater than"/>
    </location>
</feature>
<feature type="non-terminal residue">
    <location>
        <position position="19"/>
    </location>
</feature>
<dbReference type="EC" id="1.12.99.6"/>
<dbReference type="PIR" id="H27480">
    <property type="entry name" value="H27480"/>
</dbReference>
<dbReference type="GO" id="GO:0042597">
    <property type="term" value="C:periplasmic space"/>
    <property type="evidence" value="ECO:0007669"/>
    <property type="project" value="UniProtKB-SubCell"/>
</dbReference>
<dbReference type="GO" id="GO:0033748">
    <property type="term" value="F:hydrogenase (acceptor) activity"/>
    <property type="evidence" value="ECO:0007669"/>
    <property type="project" value="UniProtKB-EC"/>
</dbReference>
<dbReference type="GO" id="GO:0046872">
    <property type="term" value="F:metal ion binding"/>
    <property type="evidence" value="ECO:0007669"/>
    <property type="project" value="UniProtKB-KW"/>
</dbReference>
<keyword id="KW-0903">Direct protein sequencing</keyword>
<keyword id="KW-0408">Iron</keyword>
<keyword id="KW-0479">Metal-binding</keyword>
<keyword id="KW-0533">Nickel</keyword>
<keyword id="KW-0560">Oxidoreductase</keyword>
<keyword id="KW-0574">Periplasm</keyword>
<accession>P13066</accession>